<accession>Q54R37</accession>
<dbReference type="EMBL" id="AAFI02000055">
    <property type="protein sequence ID" value="EAL65735.1"/>
    <property type="molecule type" value="Genomic_DNA"/>
</dbReference>
<dbReference type="RefSeq" id="XP_639054.1">
    <property type="nucleotide sequence ID" value="XM_633962.1"/>
</dbReference>
<dbReference type="FunCoup" id="Q54R37">
    <property type="interactions" value="640"/>
</dbReference>
<dbReference type="PaxDb" id="44689-DDB0230144"/>
<dbReference type="EnsemblProtists" id="EAL65735">
    <property type="protein sequence ID" value="EAL65735"/>
    <property type="gene ID" value="DDB_G0283501"/>
</dbReference>
<dbReference type="GeneID" id="8624079"/>
<dbReference type="KEGG" id="ddi:DDB_G0283501"/>
<dbReference type="dictyBase" id="DDB_G0283501"/>
<dbReference type="HOGENOM" id="CLU_210588_0_0_1"/>
<dbReference type="InParanoid" id="Q54R37"/>
<dbReference type="PhylomeDB" id="Q54R37"/>
<dbReference type="PRO" id="PR:Q54R37"/>
<dbReference type="Proteomes" id="UP000002195">
    <property type="component" value="Chromosome 4"/>
</dbReference>
<dbReference type="GO" id="GO:0016020">
    <property type="term" value="C:membrane"/>
    <property type="evidence" value="ECO:0007669"/>
    <property type="project" value="UniProtKB-SubCell"/>
</dbReference>
<sequence>MLFKSLQSITSVNSIQKNQISSISVGSTQSNNNAALLDAAALVVIPGLLTAAAVAHI</sequence>
<name>Y3501_DICDI</name>
<comment type="subcellular location">
    <subcellularLocation>
        <location evidence="3">Membrane</location>
        <topology evidence="3">Single-pass membrane protein</topology>
    </subcellularLocation>
</comment>
<comment type="developmental stage">
    <text evidence="2">Expressed in prestalk cells in the slug stage. Expressed in both pstA and pstO cells up through early culmination and is subsequently repressed.</text>
</comment>
<feature type="chain" id="PRO_0000392659" description="Uncharacterized protein DDB_G0283501">
    <location>
        <begin position="1"/>
        <end position="57"/>
    </location>
</feature>
<feature type="transmembrane region" description="Helical" evidence="1">
    <location>
        <begin position="34"/>
        <end position="54"/>
    </location>
</feature>
<keyword id="KW-0472">Membrane</keyword>
<keyword id="KW-1185">Reference proteome</keyword>
<keyword id="KW-0812">Transmembrane</keyword>
<keyword id="KW-1133">Transmembrane helix</keyword>
<evidence type="ECO:0000255" key="1"/>
<evidence type="ECO:0000269" key="2">
    <source>
    </source>
</evidence>
<evidence type="ECO:0000305" key="3"/>
<reference key="1">
    <citation type="journal article" date="2005" name="Nature">
        <title>The genome of the social amoeba Dictyostelium discoideum.</title>
        <authorList>
            <person name="Eichinger L."/>
            <person name="Pachebat J.A."/>
            <person name="Gloeckner G."/>
            <person name="Rajandream M.A."/>
            <person name="Sucgang R."/>
            <person name="Berriman M."/>
            <person name="Song J."/>
            <person name="Olsen R."/>
            <person name="Szafranski K."/>
            <person name="Xu Q."/>
            <person name="Tunggal B."/>
            <person name="Kummerfeld S."/>
            <person name="Madera M."/>
            <person name="Konfortov B.A."/>
            <person name="Rivero F."/>
            <person name="Bankier A.T."/>
            <person name="Lehmann R."/>
            <person name="Hamlin N."/>
            <person name="Davies R."/>
            <person name="Gaudet P."/>
            <person name="Fey P."/>
            <person name="Pilcher K."/>
            <person name="Chen G."/>
            <person name="Saunders D."/>
            <person name="Sodergren E.J."/>
            <person name="Davis P."/>
            <person name="Kerhornou A."/>
            <person name="Nie X."/>
            <person name="Hall N."/>
            <person name="Anjard C."/>
            <person name="Hemphill L."/>
            <person name="Bason N."/>
            <person name="Farbrother P."/>
            <person name="Desany B."/>
            <person name="Just E."/>
            <person name="Morio T."/>
            <person name="Rost R."/>
            <person name="Churcher C.M."/>
            <person name="Cooper J."/>
            <person name="Haydock S."/>
            <person name="van Driessche N."/>
            <person name="Cronin A."/>
            <person name="Goodhead I."/>
            <person name="Muzny D.M."/>
            <person name="Mourier T."/>
            <person name="Pain A."/>
            <person name="Lu M."/>
            <person name="Harper D."/>
            <person name="Lindsay R."/>
            <person name="Hauser H."/>
            <person name="James K.D."/>
            <person name="Quiles M."/>
            <person name="Madan Babu M."/>
            <person name="Saito T."/>
            <person name="Buchrieser C."/>
            <person name="Wardroper A."/>
            <person name="Felder M."/>
            <person name="Thangavelu M."/>
            <person name="Johnson D."/>
            <person name="Knights A."/>
            <person name="Loulseged H."/>
            <person name="Mungall K.L."/>
            <person name="Oliver K."/>
            <person name="Price C."/>
            <person name="Quail M.A."/>
            <person name="Urushihara H."/>
            <person name="Hernandez J."/>
            <person name="Rabbinowitsch E."/>
            <person name="Steffen D."/>
            <person name="Sanders M."/>
            <person name="Ma J."/>
            <person name="Kohara Y."/>
            <person name="Sharp S."/>
            <person name="Simmonds M.N."/>
            <person name="Spiegler S."/>
            <person name="Tivey A."/>
            <person name="Sugano S."/>
            <person name="White B."/>
            <person name="Walker D."/>
            <person name="Woodward J.R."/>
            <person name="Winckler T."/>
            <person name="Tanaka Y."/>
            <person name="Shaulsky G."/>
            <person name="Schleicher M."/>
            <person name="Weinstock G.M."/>
            <person name="Rosenthal A."/>
            <person name="Cox E.C."/>
            <person name="Chisholm R.L."/>
            <person name="Gibbs R.A."/>
            <person name="Loomis W.F."/>
            <person name="Platzer M."/>
            <person name="Kay R.R."/>
            <person name="Williams J.G."/>
            <person name="Dear P.H."/>
            <person name="Noegel A.A."/>
            <person name="Barrell B.G."/>
            <person name="Kuspa A."/>
        </authorList>
    </citation>
    <scope>NUCLEOTIDE SEQUENCE [LARGE SCALE GENOMIC DNA]</scope>
    <source>
        <strain>AX4</strain>
    </source>
</reference>
<reference key="2">
    <citation type="journal article" date="2003" name="Eukaryot. Cell">
        <title>Changing patterns of gene expression in Dictyostelium prestalk cell subtypes recognized by in situ hybridization with genes from microarray analyses.</title>
        <authorList>
            <person name="Maeda M."/>
            <person name="Sakamoto H."/>
            <person name="Iranfar N."/>
            <person name="Fuller D."/>
            <person name="Maruo T."/>
            <person name="Ogihara S."/>
            <person name="Morio T."/>
            <person name="Urushihara H."/>
            <person name="Tanaka Y."/>
            <person name="Loomis W.F."/>
        </authorList>
    </citation>
    <scope>DEVELOPMENTAL STAGE [LARGE SCALE ANALYSIS]</scope>
</reference>
<reference key="3">
    <citation type="journal article" date="2004" name="Int. J. Dev. Biol.">
        <title>Identification of new modes of Dd-STATa regulation of gene expression in Dictyostelium by in situ hybridisation.</title>
        <authorList>
            <person name="Shimada N."/>
            <person name="Maeda M."/>
            <person name="Urushihara H."/>
            <person name="Kawata T."/>
        </authorList>
    </citation>
    <scope>IDENTIFICATION</scope>
</reference>
<protein>
    <recommendedName>
        <fullName>Uncharacterized protein DDB_G0283501</fullName>
    </recommendedName>
</protein>
<organism>
    <name type="scientific">Dictyostelium discoideum</name>
    <name type="common">Social amoeba</name>
    <dbReference type="NCBI Taxonomy" id="44689"/>
    <lineage>
        <taxon>Eukaryota</taxon>
        <taxon>Amoebozoa</taxon>
        <taxon>Evosea</taxon>
        <taxon>Eumycetozoa</taxon>
        <taxon>Dictyostelia</taxon>
        <taxon>Dictyosteliales</taxon>
        <taxon>Dictyosteliaceae</taxon>
        <taxon>Dictyostelium</taxon>
    </lineage>
</organism>
<gene>
    <name type="ORF">DDB_G0283501</name>
</gene>
<proteinExistence type="evidence at transcript level"/>